<keyword id="KW-0175">Coiled coil</keyword>
<keyword id="KW-0238">DNA-binding</keyword>
<keyword id="KW-0804">Transcription</keyword>
<keyword id="KW-0805">Transcription regulation</keyword>
<proteinExistence type="inferred from homology"/>
<reference key="1">
    <citation type="journal article" date="2004" name="Nucleic Acids Res.">
        <title>The genome sequence of Bacillus cereus ATCC 10987 reveals metabolic adaptations and a large plasmid related to Bacillus anthracis pXO1.</title>
        <authorList>
            <person name="Rasko D.A."/>
            <person name="Ravel J."/>
            <person name="Oekstad O.A."/>
            <person name="Helgason E."/>
            <person name="Cer R.Z."/>
            <person name="Jiang L."/>
            <person name="Shores K.A."/>
            <person name="Fouts D.E."/>
            <person name="Tourasse N.J."/>
            <person name="Angiuoli S.V."/>
            <person name="Kolonay J.F."/>
            <person name="Nelson W.C."/>
            <person name="Kolstoe A.-B."/>
            <person name="Fraser C.M."/>
            <person name="Read T.D."/>
        </authorList>
    </citation>
    <scope>NUCLEOTIDE SEQUENCE [LARGE SCALE GENOMIC DNA]</scope>
    <source>
        <strain>ATCC 10987 / NRS 248</strain>
    </source>
</reference>
<organism>
    <name type="scientific">Bacillus cereus (strain ATCC 10987 / NRS 248)</name>
    <dbReference type="NCBI Taxonomy" id="222523"/>
    <lineage>
        <taxon>Bacteria</taxon>
        <taxon>Bacillati</taxon>
        <taxon>Bacillota</taxon>
        <taxon>Bacilli</taxon>
        <taxon>Bacillales</taxon>
        <taxon>Bacillaceae</taxon>
        <taxon>Bacillus</taxon>
        <taxon>Bacillus cereus group</taxon>
    </lineage>
</organism>
<sequence>MATEKTYPMTQEGKQKLENELEDLKTVKRKEVVERIKIARSFGDLSENSEYDAAKDEQAFVEGRITQLENMIRNAVIITDNGEESTVVTLGKTVTFKELPDGDEEAYTIVGSAEADPFEGRISNDSPIAKSLLGKQIGEKVAIQTPGGEMQVEIISVK</sequence>
<evidence type="ECO:0000255" key="1">
    <source>
        <dbReference type="HAMAP-Rule" id="MF_00105"/>
    </source>
</evidence>
<accession>Q730F5</accession>
<dbReference type="EMBL" id="AE017194">
    <property type="protein sequence ID" value="AAS43362.1"/>
    <property type="molecule type" value="Genomic_DNA"/>
</dbReference>
<dbReference type="SMR" id="Q730F5"/>
<dbReference type="KEGG" id="bca:BCE_4461"/>
<dbReference type="HOGENOM" id="CLU_101379_2_1_9"/>
<dbReference type="Proteomes" id="UP000002527">
    <property type="component" value="Chromosome"/>
</dbReference>
<dbReference type="GO" id="GO:0003677">
    <property type="term" value="F:DNA binding"/>
    <property type="evidence" value="ECO:0007669"/>
    <property type="project" value="UniProtKB-UniRule"/>
</dbReference>
<dbReference type="GO" id="GO:0070063">
    <property type="term" value="F:RNA polymerase binding"/>
    <property type="evidence" value="ECO:0007669"/>
    <property type="project" value="InterPro"/>
</dbReference>
<dbReference type="GO" id="GO:0006354">
    <property type="term" value="P:DNA-templated transcription elongation"/>
    <property type="evidence" value="ECO:0007669"/>
    <property type="project" value="TreeGrafter"/>
</dbReference>
<dbReference type="GO" id="GO:0032784">
    <property type="term" value="P:regulation of DNA-templated transcription elongation"/>
    <property type="evidence" value="ECO:0007669"/>
    <property type="project" value="UniProtKB-UniRule"/>
</dbReference>
<dbReference type="FunFam" id="1.10.287.180:FF:000001">
    <property type="entry name" value="Transcription elongation factor GreA"/>
    <property type="match status" value="1"/>
</dbReference>
<dbReference type="FunFam" id="3.10.50.30:FF:000001">
    <property type="entry name" value="Transcription elongation factor GreA"/>
    <property type="match status" value="1"/>
</dbReference>
<dbReference type="Gene3D" id="3.10.50.30">
    <property type="entry name" value="Transcription elongation factor, GreA/GreB, C-terminal domain"/>
    <property type="match status" value="1"/>
</dbReference>
<dbReference type="Gene3D" id="1.10.287.180">
    <property type="entry name" value="Transcription elongation factor, GreA/GreB, N-terminal domain"/>
    <property type="match status" value="1"/>
</dbReference>
<dbReference type="HAMAP" id="MF_00105">
    <property type="entry name" value="GreA_GreB"/>
    <property type="match status" value="1"/>
</dbReference>
<dbReference type="InterPro" id="IPR036953">
    <property type="entry name" value="GreA/GreB_C_sf"/>
</dbReference>
<dbReference type="InterPro" id="IPR018151">
    <property type="entry name" value="TF_GreA/GreB_CS"/>
</dbReference>
<dbReference type="InterPro" id="IPR006359">
    <property type="entry name" value="Tscrpt_elong_fac_GreA"/>
</dbReference>
<dbReference type="InterPro" id="IPR028624">
    <property type="entry name" value="Tscrpt_elong_fac_GreA/B"/>
</dbReference>
<dbReference type="InterPro" id="IPR001437">
    <property type="entry name" value="Tscrpt_elong_fac_GreA/B_C"/>
</dbReference>
<dbReference type="InterPro" id="IPR023459">
    <property type="entry name" value="Tscrpt_elong_fac_GreA/B_fam"/>
</dbReference>
<dbReference type="InterPro" id="IPR022691">
    <property type="entry name" value="Tscrpt_elong_fac_GreA/B_N"/>
</dbReference>
<dbReference type="InterPro" id="IPR036805">
    <property type="entry name" value="Tscrpt_elong_fac_GreA/B_N_sf"/>
</dbReference>
<dbReference type="NCBIfam" id="TIGR01462">
    <property type="entry name" value="greA"/>
    <property type="match status" value="1"/>
</dbReference>
<dbReference type="NCBIfam" id="NF001261">
    <property type="entry name" value="PRK00226.1-2"/>
    <property type="match status" value="1"/>
</dbReference>
<dbReference type="NCBIfam" id="NF001263">
    <property type="entry name" value="PRK00226.1-4"/>
    <property type="match status" value="1"/>
</dbReference>
<dbReference type="PANTHER" id="PTHR30437">
    <property type="entry name" value="TRANSCRIPTION ELONGATION FACTOR GREA"/>
    <property type="match status" value="1"/>
</dbReference>
<dbReference type="PANTHER" id="PTHR30437:SF4">
    <property type="entry name" value="TRANSCRIPTION ELONGATION FACTOR GREA"/>
    <property type="match status" value="1"/>
</dbReference>
<dbReference type="Pfam" id="PF01272">
    <property type="entry name" value="GreA_GreB"/>
    <property type="match status" value="1"/>
</dbReference>
<dbReference type="Pfam" id="PF03449">
    <property type="entry name" value="GreA_GreB_N"/>
    <property type="match status" value="1"/>
</dbReference>
<dbReference type="PIRSF" id="PIRSF006092">
    <property type="entry name" value="GreA_GreB"/>
    <property type="match status" value="1"/>
</dbReference>
<dbReference type="SUPFAM" id="SSF54534">
    <property type="entry name" value="FKBP-like"/>
    <property type="match status" value="1"/>
</dbReference>
<dbReference type="SUPFAM" id="SSF46557">
    <property type="entry name" value="GreA transcript cleavage protein, N-terminal domain"/>
    <property type="match status" value="1"/>
</dbReference>
<dbReference type="PROSITE" id="PS00829">
    <property type="entry name" value="GREAB_1"/>
    <property type="match status" value="1"/>
</dbReference>
<dbReference type="PROSITE" id="PS00830">
    <property type="entry name" value="GREAB_2"/>
    <property type="match status" value="1"/>
</dbReference>
<protein>
    <recommendedName>
        <fullName evidence="1">Transcription elongation factor GreA</fullName>
    </recommendedName>
    <alternativeName>
        <fullName evidence="1">Transcript cleavage factor GreA</fullName>
    </alternativeName>
</protein>
<feature type="chain" id="PRO_1000034246" description="Transcription elongation factor GreA">
    <location>
        <begin position="1"/>
        <end position="158"/>
    </location>
</feature>
<feature type="coiled-coil region" evidence="1">
    <location>
        <begin position="4"/>
        <end position="75"/>
    </location>
</feature>
<name>GREA_BACC1</name>
<comment type="function">
    <text evidence="1">Necessary for efficient RNA polymerase transcription elongation past template-encoded arresting sites. The arresting sites in DNA have the property of trapping a certain fraction of elongating RNA polymerases that pass through, resulting in locked ternary complexes. Cleavage of the nascent transcript by cleavage factors such as GreA or GreB allows the resumption of elongation from the new 3'terminus. GreA releases sequences of 2 to 3 nucleotides.</text>
</comment>
<comment type="similarity">
    <text evidence="1">Belongs to the GreA/GreB family.</text>
</comment>
<gene>
    <name evidence="1" type="primary">greA</name>
    <name type="ordered locus">BCE_4461</name>
</gene>